<feature type="chain" id="PRO_0000339172" description="Uncharacterized HTH La-type RNA-binding protein C1527.03">
    <location>
        <begin position="1"/>
        <end position="475"/>
    </location>
</feature>
<feature type="domain" description="HTH La-type RNA-binding" evidence="1">
    <location>
        <begin position="319"/>
        <end position="408"/>
    </location>
</feature>
<feature type="region of interest" description="Disordered" evidence="2">
    <location>
        <begin position="42"/>
        <end position="292"/>
    </location>
</feature>
<feature type="compositionally biased region" description="Basic and acidic residues" evidence="2">
    <location>
        <begin position="59"/>
        <end position="72"/>
    </location>
</feature>
<feature type="compositionally biased region" description="Basic and acidic residues" evidence="2">
    <location>
        <begin position="119"/>
        <end position="134"/>
    </location>
</feature>
<feature type="compositionally biased region" description="Polar residues" evidence="2">
    <location>
        <begin position="150"/>
        <end position="159"/>
    </location>
</feature>
<feature type="compositionally biased region" description="Polar residues" evidence="2">
    <location>
        <begin position="220"/>
        <end position="242"/>
    </location>
</feature>
<feature type="compositionally biased region" description="Low complexity" evidence="2">
    <location>
        <begin position="243"/>
        <end position="263"/>
    </location>
</feature>
<feature type="compositionally biased region" description="Basic residues" evidence="2">
    <location>
        <begin position="277"/>
        <end position="289"/>
    </location>
</feature>
<feature type="modified residue" description="Phosphothreonine" evidence="4">
    <location>
        <position position="408"/>
    </location>
</feature>
<feature type="modified residue" description="Phosphoserine" evidence="4">
    <location>
        <position position="410"/>
    </location>
</feature>
<organism>
    <name type="scientific">Schizosaccharomyces pombe (strain 972 / ATCC 24843)</name>
    <name type="common">Fission yeast</name>
    <dbReference type="NCBI Taxonomy" id="284812"/>
    <lineage>
        <taxon>Eukaryota</taxon>
        <taxon>Fungi</taxon>
        <taxon>Dikarya</taxon>
        <taxon>Ascomycota</taxon>
        <taxon>Taphrinomycotina</taxon>
        <taxon>Schizosaccharomycetes</taxon>
        <taxon>Schizosaccharomycetales</taxon>
        <taxon>Schizosaccharomycetaceae</taxon>
        <taxon>Schizosaccharomyces</taxon>
    </lineage>
</organism>
<keyword id="KW-0963">Cytoplasm</keyword>
<keyword id="KW-0597">Phosphoprotein</keyword>
<keyword id="KW-1185">Reference proteome</keyword>
<keyword id="KW-0694">RNA-binding</keyword>
<reference key="1">
    <citation type="journal article" date="2002" name="Nature">
        <title>The genome sequence of Schizosaccharomyces pombe.</title>
        <authorList>
            <person name="Wood V."/>
            <person name="Gwilliam R."/>
            <person name="Rajandream M.A."/>
            <person name="Lyne M.H."/>
            <person name="Lyne R."/>
            <person name="Stewart A."/>
            <person name="Sgouros J.G."/>
            <person name="Peat N."/>
            <person name="Hayles J."/>
            <person name="Baker S.G."/>
            <person name="Basham D."/>
            <person name="Bowman S."/>
            <person name="Brooks K."/>
            <person name="Brown D."/>
            <person name="Brown S."/>
            <person name="Chillingworth T."/>
            <person name="Churcher C.M."/>
            <person name="Collins M."/>
            <person name="Connor R."/>
            <person name="Cronin A."/>
            <person name="Davis P."/>
            <person name="Feltwell T."/>
            <person name="Fraser A."/>
            <person name="Gentles S."/>
            <person name="Goble A."/>
            <person name="Hamlin N."/>
            <person name="Harris D.E."/>
            <person name="Hidalgo J."/>
            <person name="Hodgson G."/>
            <person name="Holroyd S."/>
            <person name="Hornsby T."/>
            <person name="Howarth S."/>
            <person name="Huckle E.J."/>
            <person name="Hunt S."/>
            <person name="Jagels K."/>
            <person name="James K.D."/>
            <person name="Jones L."/>
            <person name="Jones M."/>
            <person name="Leather S."/>
            <person name="McDonald S."/>
            <person name="McLean J."/>
            <person name="Mooney P."/>
            <person name="Moule S."/>
            <person name="Mungall K.L."/>
            <person name="Murphy L.D."/>
            <person name="Niblett D."/>
            <person name="Odell C."/>
            <person name="Oliver K."/>
            <person name="O'Neil S."/>
            <person name="Pearson D."/>
            <person name="Quail M.A."/>
            <person name="Rabbinowitsch E."/>
            <person name="Rutherford K.M."/>
            <person name="Rutter S."/>
            <person name="Saunders D."/>
            <person name="Seeger K."/>
            <person name="Sharp S."/>
            <person name="Skelton J."/>
            <person name="Simmonds M.N."/>
            <person name="Squares R."/>
            <person name="Squares S."/>
            <person name="Stevens K."/>
            <person name="Taylor K."/>
            <person name="Taylor R.G."/>
            <person name="Tivey A."/>
            <person name="Walsh S.V."/>
            <person name="Warren T."/>
            <person name="Whitehead S."/>
            <person name="Woodward J.R."/>
            <person name="Volckaert G."/>
            <person name="Aert R."/>
            <person name="Robben J."/>
            <person name="Grymonprez B."/>
            <person name="Weltjens I."/>
            <person name="Vanstreels E."/>
            <person name="Rieger M."/>
            <person name="Schaefer M."/>
            <person name="Mueller-Auer S."/>
            <person name="Gabel C."/>
            <person name="Fuchs M."/>
            <person name="Duesterhoeft A."/>
            <person name="Fritzc C."/>
            <person name="Holzer E."/>
            <person name="Moestl D."/>
            <person name="Hilbert H."/>
            <person name="Borzym K."/>
            <person name="Langer I."/>
            <person name="Beck A."/>
            <person name="Lehrach H."/>
            <person name="Reinhardt R."/>
            <person name="Pohl T.M."/>
            <person name="Eger P."/>
            <person name="Zimmermann W."/>
            <person name="Wedler H."/>
            <person name="Wambutt R."/>
            <person name="Purnelle B."/>
            <person name="Goffeau A."/>
            <person name="Cadieu E."/>
            <person name="Dreano S."/>
            <person name="Gloux S."/>
            <person name="Lelaure V."/>
            <person name="Mottier S."/>
            <person name="Galibert F."/>
            <person name="Aves S.J."/>
            <person name="Xiang Z."/>
            <person name="Hunt C."/>
            <person name="Moore K."/>
            <person name="Hurst S.M."/>
            <person name="Lucas M."/>
            <person name="Rochet M."/>
            <person name="Gaillardin C."/>
            <person name="Tallada V.A."/>
            <person name="Garzon A."/>
            <person name="Thode G."/>
            <person name="Daga R.R."/>
            <person name="Cruzado L."/>
            <person name="Jimenez J."/>
            <person name="Sanchez M."/>
            <person name="del Rey F."/>
            <person name="Benito J."/>
            <person name="Dominguez A."/>
            <person name="Revuelta J.L."/>
            <person name="Moreno S."/>
            <person name="Armstrong J."/>
            <person name="Forsburg S.L."/>
            <person name="Cerutti L."/>
            <person name="Lowe T."/>
            <person name="McCombie W.R."/>
            <person name="Paulsen I."/>
            <person name="Potashkin J."/>
            <person name="Shpakovski G.V."/>
            <person name="Ussery D."/>
            <person name="Barrell B.G."/>
            <person name="Nurse P."/>
        </authorList>
    </citation>
    <scope>NUCLEOTIDE SEQUENCE [LARGE SCALE GENOMIC DNA]</scope>
    <source>
        <strain>972 / ATCC 24843</strain>
    </source>
</reference>
<reference key="2">
    <citation type="journal article" date="2006" name="Nat. Biotechnol.">
        <title>ORFeome cloning and global analysis of protein localization in the fission yeast Schizosaccharomyces pombe.</title>
        <authorList>
            <person name="Matsuyama A."/>
            <person name="Arai R."/>
            <person name="Yashiroda Y."/>
            <person name="Shirai A."/>
            <person name="Kamata A."/>
            <person name="Sekido S."/>
            <person name="Kobayashi Y."/>
            <person name="Hashimoto A."/>
            <person name="Hamamoto M."/>
            <person name="Hiraoka Y."/>
            <person name="Horinouchi S."/>
            <person name="Yoshida M."/>
        </authorList>
    </citation>
    <scope>SUBCELLULAR LOCATION [LARGE SCALE ANALYSIS]</scope>
</reference>
<reference key="3">
    <citation type="journal article" date="2008" name="J. Proteome Res.">
        <title>Phosphoproteome analysis of fission yeast.</title>
        <authorList>
            <person name="Wilson-Grady J.T."/>
            <person name="Villen J."/>
            <person name="Gygi S.P."/>
        </authorList>
    </citation>
    <scope>PHOSPHORYLATION [LARGE SCALE ANALYSIS] AT THR-408 AND SER-410</scope>
    <scope>IDENTIFICATION BY MASS SPECTROMETRY</scope>
</reference>
<dbReference type="EMBL" id="CU329670">
    <property type="protein sequence ID" value="CAB90798.1"/>
    <property type="molecule type" value="Genomic_DNA"/>
</dbReference>
<dbReference type="BioGRID" id="278141">
    <property type="interactions" value="15"/>
</dbReference>
<dbReference type="STRING" id="284812.Q9P6K0"/>
<dbReference type="iPTMnet" id="Q9P6K0"/>
<dbReference type="PaxDb" id="4896-SPAC1527.03.1"/>
<dbReference type="EnsemblFungi" id="SPAC1527.03.1">
    <property type="protein sequence ID" value="SPAC1527.03.1:pep"/>
    <property type="gene ID" value="SPAC1527.03"/>
</dbReference>
<dbReference type="KEGG" id="spo:2541645"/>
<dbReference type="PomBase" id="SPAC1527.03"/>
<dbReference type="VEuPathDB" id="FungiDB:SPAC1527.03"/>
<dbReference type="eggNOG" id="KOG2590">
    <property type="taxonomic scope" value="Eukaryota"/>
</dbReference>
<dbReference type="HOGENOM" id="CLU_045579_0_0_1"/>
<dbReference type="InParanoid" id="Q9P6K0"/>
<dbReference type="OMA" id="HMDDEGY"/>
<dbReference type="PRO" id="PR:Q9P6K0"/>
<dbReference type="Proteomes" id="UP000002485">
    <property type="component" value="Chromosome I"/>
</dbReference>
<dbReference type="GO" id="GO:0010494">
    <property type="term" value="C:cytoplasmic stress granule"/>
    <property type="evidence" value="ECO:0000318"/>
    <property type="project" value="GO_Central"/>
</dbReference>
<dbReference type="GO" id="GO:0005829">
    <property type="term" value="C:cytosol"/>
    <property type="evidence" value="ECO:0007005"/>
    <property type="project" value="PomBase"/>
</dbReference>
<dbReference type="GO" id="GO:0003723">
    <property type="term" value="F:RNA binding"/>
    <property type="evidence" value="ECO:0000318"/>
    <property type="project" value="GO_Central"/>
</dbReference>
<dbReference type="GO" id="GO:0002181">
    <property type="term" value="P:cytoplasmic translation"/>
    <property type="evidence" value="ECO:0000266"/>
    <property type="project" value="PomBase"/>
</dbReference>
<dbReference type="GO" id="GO:0045727">
    <property type="term" value="P:positive regulation of translation"/>
    <property type="evidence" value="ECO:0000318"/>
    <property type="project" value="GO_Central"/>
</dbReference>
<dbReference type="CDD" id="cd07323">
    <property type="entry name" value="LAM"/>
    <property type="match status" value="1"/>
</dbReference>
<dbReference type="Gene3D" id="1.10.10.10">
    <property type="entry name" value="Winged helix-like DNA-binding domain superfamily/Winged helix DNA-binding domain"/>
    <property type="match status" value="1"/>
</dbReference>
<dbReference type="InterPro" id="IPR045180">
    <property type="entry name" value="La_dom_prot"/>
</dbReference>
<dbReference type="InterPro" id="IPR006630">
    <property type="entry name" value="La_HTH"/>
</dbReference>
<dbReference type="InterPro" id="IPR036388">
    <property type="entry name" value="WH-like_DNA-bd_sf"/>
</dbReference>
<dbReference type="InterPro" id="IPR036390">
    <property type="entry name" value="WH_DNA-bd_sf"/>
</dbReference>
<dbReference type="PANTHER" id="PTHR22792:SF132">
    <property type="entry name" value="LA-RELATED PROTEIN 1"/>
    <property type="match status" value="1"/>
</dbReference>
<dbReference type="PANTHER" id="PTHR22792">
    <property type="entry name" value="LUPUS LA PROTEIN-RELATED"/>
    <property type="match status" value="1"/>
</dbReference>
<dbReference type="Pfam" id="PF05383">
    <property type="entry name" value="La"/>
    <property type="match status" value="1"/>
</dbReference>
<dbReference type="SMART" id="SM00715">
    <property type="entry name" value="LA"/>
    <property type="match status" value="1"/>
</dbReference>
<dbReference type="SUPFAM" id="SSF46785">
    <property type="entry name" value="Winged helix' DNA-binding domain"/>
    <property type="match status" value="1"/>
</dbReference>
<dbReference type="PROSITE" id="PS50961">
    <property type="entry name" value="HTH_LA"/>
    <property type="match status" value="1"/>
</dbReference>
<accession>Q9P6K0</accession>
<comment type="subcellular location">
    <subcellularLocation>
        <location evidence="3">Cytoplasm</location>
    </subcellularLocation>
</comment>
<evidence type="ECO:0000255" key="1">
    <source>
        <dbReference type="PROSITE-ProRule" id="PRU00332"/>
    </source>
</evidence>
<evidence type="ECO:0000256" key="2">
    <source>
        <dbReference type="SAM" id="MobiDB-lite"/>
    </source>
</evidence>
<evidence type="ECO:0000269" key="3">
    <source>
    </source>
</evidence>
<evidence type="ECO:0000269" key="4">
    <source>
    </source>
</evidence>
<name>YLA3_SCHPO</name>
<protein>
    <recommendedName>
        <fullName>Uncharacterized HTH La-type RNA-binding protein C1527.03</fullName>
    </recommendedName>
</protein>
<proteinExistence type="evidence at protein level"/>
<sequence>MSHKEPSAAETSTVVHSEEDKAFCIGTGAVISEEREKEVLKNLQNSLTGKTAEENLNDEANHTSSDKSKSEDYQPSNVNVWALRKEKMIPKKHSHVKQEKRFSKSLQLQDPNVWPSPEIAEKQVEDRKLSDDSQKPLAPKANGKEKWVTITPNFTHTPISNRKSSRSRNDGSRRNGNGRRRGNYSSHGSNKRQTNYSREKDASRSIDSSNPSAEYRDDINNTFGSQTVSSANGKEVPQTSEDSSSQAPHHSSSSGHAPSQQGGNKHSYKKSDSQQSFHHKGRNTRKGQRHNNGFYRNIANNIQGPFPNYPVVVNGNGVNPYLCDVQAFLTSQLEYYFSIENLCKDMFLRKHMDDEGYVPLAFLASFNRIKSFSTDLNLLHAACKASDIIDVAIDLQSPMSIKVRRKETWSPWILPSESRLKFEMAKYPQINSSSSMSPLASSISNLTISPPFIPSSVDSIIKRDVQTEVEDKLTV</sequence>
<gene>
    <name type="ORF">SPAC1527.03</name>
</gene>